<gene>
    <name evidence="1" type="primary">hisS</name>
    <name type="ordered locus">XC_2383</name>
</gene>
<protein>
    <recommendedName>
        <fullName evidence="1">Histidine--tRNA ligase</fullName>
        <ecNumber evidence="1">6.1.1.21</ecNumber>
    </recommendedName>
    <alternativeName>
        <fullName evidence="1">Histidyl-tRNA synthetase</fullName>
        <shortName evidence="1">HisRS</shortName>
    </alternativeName>
</protein>
<reference key="1">
    <citation type="journal article" date="2005" name="Genome Res.">
        <title>Comparative and functional genomic analyses of the pathogenicity of phytopathogen Xanthomonas campestris pv. campestris.</title>
        <authorList>
            <person name="Qian W."/>
            <person name="Jia Y."/>
            <person name="Ren S.-X."/>
            <person name="He Y.-Q."/>
            <person name="Feng J.-X."/>
            <person name="Lu L.-F."/>
            <person name="Sun Q."/>
            <person name="Ying G."/>
            <person name="Tang D.-J."/>
            <person name="Tang H."/>
            <person name="Wu W."/>
            <person name="Hao P."/>
            <person name="Wang L."/>
            <person name="Jiang B.-L."/>
            <person name="Zeng S."/>
            <person name="Gu W.-Y."/>
            <person name="Lu G."/>
            <person name="Rong L."/>
            <person name="Tian Y."/>
            <person name="Yao Z."/>
            <person name="Fu G."/>
            <person name="Chen B."/>
            <person name="Fang R."/>
            <person name="Qiang B."/>
            <person name="Chen Z."/>
            <person name="Zhao G.-P."/>
            <person name="Tang J.-L."/>
            <person name="He C."/>
        </authorList>
    </citation>
    <scope>NUCLEOTIDE SEQUENCE [LARGE SCALE GENOMIC DNA]</scope>
    <source>
        <strain>8004</strain>
    </source>
</reference>
<feature type="chain" id="PRO_0000136301" description="Histidine--tRNA ligase">
    <location>
        <begin position="1"/>
        <end position="477"/>
    </location>
</feature>
<sequence length="477" mass="52459">MIKPRTPPGIMELLPREQIAFQRMLDVIRRNYERFGFLPVETPVFELSDVLLTKSGGETERQVYFVQSTGALANAAAAADEGAESGGLPELALRFDLTVPLARYVAEHEHELSFPFRRYQMQRVYRGERAQRGRFREFYQCDIDVIGKDALSIRYDAEVLAVIHAVFAELGIGDFKVQLNNRKLLRGFFESLGVAEGELQLAVLREVDKIDKRGAEYVRDTLTGEGFGIATAQVDKILAFVAVRSNGHADALAQLQALEASVGASATLGEGIAELREVLELVKALGVPETAYCLNFSIARGLDYYTGTVYETTLTDHPQIGSICSGGRYENLASHYTKSKLPGVGISIGLTRLFWQLREAGLIAGIAESSVHAMVALMDESRLDDALDIARRLRIGGINTEVQMEPKKVGKQFQYAARAGIRFVVLAGDDELARGVVAVKDLVREQQFDVARDELASTLQVELEQAKAMLVSGIAAN</sequence>
<keyword id="KW-0030">Aminoacyl-tRNA synthetase</keyword>
<keyword id="KW-0067">ATP-binding</keyword>
<keyword id="KW-0963">Cytoplasm</keyword>
<keyword id="KW-0436">Ligase</keyword>
<keyword id="KW-0547">Nucleotide-binding</keyword>
<keyword id="KW-0648">Protein biosynthesis</keyword>
<name>SYH_XANC8</name>
<dbReference type="EC" id="6.1.1.21" evidence="1"/>
<dbReference type="EMBL" id="CP000050">
    <property type="protein sequence ID" value="AAY49436.1"/>
    <property type="molecule type" value="Genomic_DNA"/>
</dbReference>
<dbReference type="RefSeq" id="WP_011269814.1">
    <property type="nucleotide sequence ID" value="NZ_CP155948.1"/>
</dbReference>
<dbReference type="SMR" id="Q4UU37"/>
<dbReference type="KEGG" id="xcb:XC_2383"/>
<dbReference type="HOGENOM" id="CLU_025113_3_0_6"/>
<dbReference type="Proteomes" id="UP000000420">
    <property type="component" value="Chromosome"/>
</dbReference>
<dbReference type="GO" id="GO:0005737">
    <property type="term" value="C:cytoplasm"/>
    <property type="evidence" value="ECO:0007669"/>
    <property type="project" value="UniProtKB-SubCell"/>
</dbReference>
<dbReference type="GO" id="GO:0005524">
    <property type="term" value="F:ATP binding"/>
    <property type="evidence" value="ECO:0007669"/>
    <property type="project" value="UniProtKB-UniRule"/>
</dbReference>
<dbReference type="GO" id="GO:0004821">
    <property type="term" value="F:histidine-tRNA ligase activity"/>
    <property type="evidence" value="ECO:0007669"/>
    <property type="project" value="UniProtKB-UniRule"/>
</dbReference>
<dbReference type="GO" id="GO:0006427">
    <property type="term" value="P:histidyl-tRNA aminoacylation"/>
    <property type="evidence" value="ECO:0007669"/>
    <property type="project" value="UniProtKB-UniRule"/>
</dbReference>
<dbReference type="CDD" id="cd00773">
    <property type="entry name" value="HisRS-like_core"/>
    <property type="match status" value="1"/>
</dbReference>
<dbReference type="CDD" id="cd00859">
    <property type="entry name" value="HisRS_anticodon"/>
    <property type="match status" value="1"/>
</dbReference>
<dbReference type="FunFam" id="3.30.930.10:FF:000129">
    <property type="entry name" value="Histidine--tRNA ligase"/>
    <property type="match status" value="1"/>
</dbReference>
<dbReference type="FunFam" id="3.40.50.800:FF:000027">
    <property type="entry name" value="Histidine--tRNA ligase"/>
    <property type="match status" value="1"/>
</dbReference>
<dbReference type="Gene3D" id="3.40.50.800">
    <property type="entry name" value="Anticodon-binding domain"/>
    <property type="match status" value="1"/>
</dbReference>
<dbReference type="Gene3D" id="3.30.930.10">
    <property type="entry name" value="Bira Bifunctional Protein, Domain 2"/>
    <property type="match status" value="1"/>
</dbReference>
<dbReference type="HAMAP" id="MF_00127">
    <property type="entry name" value="His_tRNA_synth"/>
    <property type="match status" value="1"/>
</dbReference>
<dbReference type="InterPro" id="IPR006195">
    <property type="entry name" value="aa-tRNA-synth_II"/>
</dbReference>
<dbReference type="InterPro" id="IPR045864">
    <property type="entry name" value="aa-tRNA-synth_II/BPL/LPL"/>
</dbReference>
<dbReference type="InterPro" id="IPR004154">
    <property type="entry name" value="Anticodon-bd"/>
</dbReference>
<dbReference type="InterPro" id="IPR036621">
    <property type="entry name" value="Anticodon-bd_dom_sf"/>
</dbReference>
<dbReference type="InterPro" id="IPR015807">
    <property type="entry name" value="His-tRNA-ligase"/>
</dbReference>
<dbReference type="InterPro" id="IPR041715">
    <property type="entry name" value="HisRS-like_core"/>
</dbReference>
<dbReference type="InterPro" id="IPR004516">
    <property type="entry name" value="HisRS/HisZ"/>
</dbReference>
<dbReference type="InterPro" id="IPR033656">
    <property type="entry name" value="HisRS_anticodon"/>
</dbReference>
<dbReference type="NCBIfam" id="TIGR00442">
    <property type="entry name" value="hisS"/>
    <property type="match status" value="1"/>
</dbReference>
<dbReference type="PANTHER" id="PTHR11476:SF7">
    <property type="entry name" value="HISTIDINE--TRNA LIGASE"/>
    <property type="match status" value="1"/>
</dbReference>
<dbReference type="PANTHER" id="PTHR11476">
    <property type="entry name" value="HISTIDYL-TRNA SYNTHETASE"/>
    <property type="match status" value="1"/>
</dbReference>
<dbReference type="Pfam" id="PF03129">
    <property type="entry name" value="HGTP_anticodon"/>
    <property type="match status" value="1"/>
</dbReference>
<dbReference type="Pfam" id="PF13393">
    <property type="entry name" value="tRNA-synt_His"/>
    <property type="match status" value="1"/>
</dbReference>
<dbReference type="PIRSF" id="PIRSF001549">
    <property type="entry name" value="His-tRNA_synth"/>
    <property type="match status" value="1"/>
</dbReference>
<dbReference type="SUPFAM" id="SSF52954">
    <property type="entry name" value="Class II aaRS ABD-related"/>
    <property type="match status" value="1"/>
</dbReference>
<dbReference type="SUPFAM" id="SSF55681">
    <property type="entry name" value="Class II aaRS and biotin synthetases"/>
    <property type="match status" value="1"/>
</dbReference>
<dbReference type="PROSITE" id="PS50862">
    <property type="entry name" value="AA_TRNA_LIGASE_II"/>
    <property type="match status" value="1"/>
</dbReference>
<accession>Q4UU37</accession>
<comment type="catalytic activity">
    <reaction evidence="1">
        <text>tRNA(His) + L-histidine + ATP = L-histidyl-tRNA(His) + AMP + diphosphate + H(+)</text>
        <dbReference type="Rhea" id="RHEA:17313"/>
        <dbReference type="Rhea" id="RHEA-COMP:9665"/>
        <dbReference type="Rhea" id="RHEA-COMP:9689"/>
        <dbReference type="ChEBI" id="CHEBI:15378"/>
        <dbReference type="ChEBI" id="CHEBI:30616"/>
        <dbReference type="ChEBI" id="CHEBI:33019"/>
        <dbReference type="ChEBI" id="CHEBI:57595"/>
        <dbReference type="ChEBI" id="CHEBI:78442"/>
        <dbReference type="ChEBI" id="CHEBI:78527"/>
        <dbReference type="ChEBI" id="CHEBI:456215"/>
        <dbReference type="EC" id="6.1.1.21"/>
    </reaction>
</comment>
<comment type="subunit">
    <text evidence="1">Homodimer.</text>
</comment>
<comment type="subcellular location">
    <subcellularLocation>
        <location evidence="1">Cytoplasm</location>
    </subcellularLocation>
</comment>
<comment type="similarity">
    <text evidence="1">Belongs to the class-II aminoacyl-tRNA synthetase family.</text>
</comment>
<evidence type="ECO:0000255" key="1">
    <source>
        <dbReference type="HAMAP-Rule" id="MF_00127"/>
    </source>
</evidence>
<proteinExistence type="inferred from homology"/>
<organism>
    <name type="scientific">Xanthomonas campestris pv. campestris (strain 8004)</name>
    <dbReference type="NCBI Taxonomy" id="314565"/>
    <lineage>
        <taxon>Bacteria</taxon>
        <taxon>Pseudomonadati</taxon>
        <taxon>Pseudomonadota</taxon>
        <taxon>Gammaproteobacteria</taxon>
        <taxon>Lysobacterales</taxon>
        <taxon>Lysobacteraceae</taxon>
        <taxon>Xanthomonas</taxon>
    </lineage>
</organism>